<organism>
    <name type="scientific">Macaca fascicularis</name>
    <name type="common">Crab-eating macaque</name>
    <name type="synonym">Cynomolgus monkey</name>
    <dbReference type="NCBI Taxonomy" id="9541"/>
    <lineage>
        <taxon>Eukaryota</taxon>
        <taxon>Metazoa</taxon>
        <taxon>Chordata</taxon>
        <taxon>Craniata</taxon>
        <taxon>Vertebrata</taxon>
        <taxon>Euteleostomi</taxon>
        <taxon>Mammalia</taxon>
        <taxon>Eutheria</taxon>
        <taxon>Euarchontoglires</taxon>
        <taxon>Primates</taxon>
        <taxon>Haplorrhini</taxon>
        <taxon>Catarrhini</taxon>
        <taxon>Cercopithecidae</taxon>
        <taxon>Cercopithecinae</taxon>
        <taxon>Macaca</taxon>
    </lineage>
</organism>
<name>GTR12_MACFA</name>
<proteinExistence type="evidence at transcript level"/>
<keyword id="KW-1003">Cell membrane</keyword>
<keyword id="KW-0963">Cytoplasm</keyword>
<keyword id="KW-0325">Glycoprotein</keyword>
<keyword id="KW-0472">Membrane</keyword>
<keyword id="KW-1185">Reference proteome</keyword>
<keyword id="KW-0762">Sugar transport</keyword>
<keyword id="KW-0812">Transmembrane</keyword>
<keyword id="KW-1133">Transmembrane helix</keyword>
<keyword id="KW-0813">Transport</keyword>
<feature type="chain" id="PRO_0000292015" description="Solute carrier family 2, facilitated glucose transporter member 12">
    <location>
        <begin position="1"/>
        <end position="621"/>
    </location>
</feature>
<feature type="topological domain" description="Cytoplasmic" evidence="4">
    <location>
        <begin position="1"/>
        <end position="48"/>
    </location>
</feature>
<feature type="transmembrane region" description="Helical" evidence="4">
    <location>
        <begin position="49"/>
        <end position="69"/>
    </location>
</feature>
<feature type="topological domain" description="Extracellular" evidence="4">
    <location>
        <begin position="70"/>
        <end position="84"/>
    </location>
</feature>
<feature type="transmembrane region" description="Helical" evidence="4">
    <location>
        <begin position="85"/>
        <end position="105"/>
    </location>
</feature>
<feature type="topological domain" description="Cytoplasmic" evidence="4">
    <location>
        <begin position="106"/>
        <end position="119"/>
    </location>
</feature>
<feature type="transmembrane region" description="Helical" evidence="4">
    <location>
        <begin position="120"/>
        <end position="140"/>
    </location>
</feature>
<feature type="topological domain" description="Extracellular" evidence="4">
    <location>
        <position position="141"/>
    </location>
</feature>
<feature type="transmembrane region" description="Helical" evidence="4">
    <location>
        <begin position="142"/>
        <end position="162"/>
    </location>
</feature>
<feature type="topological domain" description="Cytoplasmic" evidence="4">
    <location>
        <begin position="163"/>
        <end position="176"/>
    </location>
</feature>
<feature type="transmembrane region" description="Helical" evidence="4">
    <location>
        <begin position="177"/>
        <end position="197"/>
    </location>
</feature>
<feature type="topological domain" description="Extracellular" evidence="4">
    <location>
        <begin position="198"/>
        <end position="201"/>
    </location>
</feature>
<feature type="transmembrane region" description="Helical" evidence="4">
    <location>
        <begin position="202"/>
        <end position="222"/>
    </location>
</feature>
<feature type="topological domain" description="Cytoplasmic" evidence="4">
    <location>
        <begin position="223"/>
        <end position="282"/>
    </location>
</feature>
<feature type="transmembrane region" description="Helical" evidence="4">
    <location>
        <begin position="283"/>
        <end position="303"/>
    </location>
</feature>
<feature type="topological domain" description="Extracellular" evidence="4">
    <location>
        <begin position="304"/>
        <end position="321"/>
    </location>
</feature>
<feature type="transmembrane region" description="Helical" evidence="4">
    <location>
        <begin position="322"/>
        <end position="342"/>
    </location>
</feature>
<feature type="topological domain" description="Cytoplasmic" evidence="4">
    <location>
        <begin position="343"/>
        <end position="349"/>
    </location>
</feature>
<feature type="transmembrane region" description="Helical" evidence="4">
    <location>
        <begin position="350"/>
        <end position="370"/>
    </location>
</feature>
<feature type="topological domain" description="Extracellular" evidence="4">
    <location>
        <begin position="371"/>
        <end position="470"/>
    </location>
</feature>
<feature type="transmembrane region" description="Helical" evidence="4">
    <location>
        <begin position="471"/>
        <end position="491"/>
    </location>
</feature>
<feature type="topological domain" description="Cytoplasmic" evidence="4">
    <location>
        <begin position="492"/>
        <end position="502"/>
    </location>
</feature>
<feature type="transmembrane region" description="Helical" evidence="4">
    <location>
        <begin position="503"/>
        <end position="523"/>
    </location>
</feature>
<feature type="topological domain" description="Extracellular" evidence="4">
    <location>
        <begin position="524"/>
        <end position="532"/>
    </location>
</feature>
<feature type="transmembrane region" description="Helical" evidence="4">
    <location>
        <begin position="533"/>
        <end position="553"/>
    </location>
</feature>
<feature type="topological domain" description="Cytoplasmic" evidence="4">
    <location>
        <begin position="554"/>
        <end position="621"/>
    </location>
</feature>
<feature type="glycosylation site" description="N-linked (GlcNAc...) asparagine" evidence="4">
    <location>
        <position position="375"/>
    </location>
</feature>
<feature type="glycosylation site" description="N-linked (GlcNAc...) asparagine" evidence="4">
    <location>
        <position position="387"/>
    </location>
</feature>
<feature type="glycosylation site" description="N-linked (GlcNAc...) asparagine" evidence="4">
    <location>
        <position position="400"/>
    </location>
</feature>
<feature type="glycosylation site" description="N-linked (GlcNAc...) asparagine" evidence="4">
    <location>
        <position position="405"/>
    </location>
</feature>
<gene>
    <name evidence="3" type="primary">SLC2A12</name>
    <name evidence="3" type="synonym">GLUT12</name>
    <name evidence="5" type="ORF">QflA-11110</name>
</gene>
<protein>
    <recommendedName>
        <fullName evidence="6">Solute carrier family 2, facilitated glucose transporter member 12</fullName>
    </recommendedName>
    <alternativeName>
        <fullName evidence="3">Glucose transporter type 12</fullName>
        <shortName evidence="3">GLUT-12</shortName>
    </alternativeName>
</protein>
<evidence type="ECO:0000250" key="1">
    <source>
        <dbReference type="UniProtKB" id="Q5J316"/>
    </source>
</evidence>
<evidence type="ECO:0000250" key="2">
    <source>
        <dbReference type="UniProtKB" id="Q8BFW9"/>
    </source>
</evidence>
<evidence type="ECO:0000250" key="3">
    <source>
        <dbReference type="UniProtKB" id="Q8TD20"/>
    </source>
</evidence>
<evidence type="ECO:0000255" key="4"/>
<evidence type="ECO:0000303" key="5">
    <source>
    </source>
</evidence>
<evidence type="ECO:0000305" key="6"/>
<dbReference type="EMBL" id="AB056798">
    <property type="protein sequence ID" value="BAB39322.1"/>
    <property type="molecule type" value="mRNA"/>
</dbReference>
<dbReference type="RefSeq" id="NP_001271639.1">
    <property type="nucleotide sequence ID" value="NM_001284710.1"/>
</dbReference>
<dbReference type="SMR" id="Q9BE72"/>
<dbReference type="STRING" id="9541.ENSMFAP00000006024"/>
<dbReference type="GlyCosmos" id="Q9BE72">
    <property type="glycosylation" value="4 sites, No reported glycans"/>
</dbReference>
<dbReference type="eggNOG" id="KOG0254">
    <property type="taxonomic scope" value="Eukaryota"/>
</dbReference>
<dbReference type="Proteomes" id="UP000233100">
    <property type="component" value="Unplaced"/>
</dbReference>
<dbReference type="GO" id="GO:0012505">
    <property type="term" value="C:endomembrane system"/>
    <property type="evidence" value="ECO:0007669"/>
    <property type="project" value="UniProtKB-SubCell"/>
</dbReference>
<dbReference type="GO" id="GO:0048471">
    <property type="term" value="C:perinuclear region of cytoplasm"/>
    <property type="evidence" value="ECO:0007669"/>
    <property type="project" value="UniProtKB-SubCell"/>
</dbReference>
<dbReference type="GO" id="GO:0005886">
    <property type="term" value="C:plasma membrane"/>
    <property type="evidence" value="ECO:0007669"/>
    <property type="project" value="UniProtKB-SubCell"/>
</dbReference>
<dbReference type="GO" id="GO:0022857">
    <property type="term" value="F:transmembrane transporter activity"/>
    <property type="evidence" value="ECO:0007669"/>
    <property type="project" value="InterPro"/>
</dbReference>
<dbReference type="GO" id="GO:0072359">
    <property type="term" value="P:circulatory system development"/>
    <property type="evidence" value="ECO:0007669"/>
    <property type="project" value="TreeGrafter"/>
</dbReference>
<dbReference type="GO" id="GO:1904659">
    <property type="term" value="P:D-glucose transmembrane transport"/>
    <property type="evidence" value="ECO:0007669"/>
    <property type="project" value="TreeGrafter"/>
</dbReference>
<dbReference type="CDD" id="cd17435">
    <property type="entry name" value="MFS_GLUT12_Class3"/>
    <property type="match status" value="1"/>
</dbReference>
<dbReference type="FunFam" id="1.20.1250.20:FF:000237">
    <property type="entry name" value="Solute carrier family 2 (Facilitated glucose transporter), member 12"/>
    <property type="match status" value="1"/>
</dbReference>
<dbReference type="FunFam" id="1.20.1250.20:FF:000124">
    <property type="entry name" value="Solute carrier family 2, facilitated glucose transporter member 12"/>
    <property type="match status" value="1"/>
</dbReference>
<dbReference type="Gene3D" id="1.20.1250.20">
    <property type="entry name" value="MFS general substrate transporter like domains"/>
    <property type="match status" value="2"/>
</dbReference>
<dbReference type="InterPro" id="IPR020846">
    <property type="entry name" value="MFS_dom"/>
</dbReference>
<dbReference type="InterPro" id="IPR005828">
    <property type="entry name" value="MFS_sugar_transport-like"/>
</dbReference>
<dbReference type="InterPro" id="IPR050820">
    <property type="entry name" value="MFS_Sugar_Transporter"/>
</dbReference>
<dbReference type="InterPro" id="IPR036259">
    <property type="entry name" value="MFS_trans_sf"/>
</dbReference>
<dbReference type="InterPro" id="IPR003663">
    <property type="entry name" value="Sugar/inositol_transpt"/>
</dbReference>
<dbReference type="InterPro" id="IPR005829">
    <property type="entry name" value="Sugar_transporter_CS"/>
</dbReference>
<dbReference type="PANTHER" id="PTHR48023">
    <property type="entry name" value="D-XYLOSE-PROTON SYMPORTER-LIKE 2"/>
    <property type="match status" value="1"/>
</dbReference>
<dbReference type="PANTHER" id="PTHR48023:SF2">
    <property type="entry name" value="SOLUTE CARRIER FAMILY 2, FACILITATED GLUCOSE TRANSPORTER MEMBER 12"/>
    <property type="match status" value="1"/>
</dbReference>
<dbReference type="Pfam" id="PF00083">
    <property type="entry name" value="Sugar_tr"/>
    <property type="match status" value="2"/>
</dbReference>
<dbReference type="PRINTS" id="PR00171">
    <property type="entry name" value="SUGRTRNSPORT"/>
</dbReference>
<dbReference type="SUPFAM" id="SSF103473">
    <property type="entry name" value="MFS general substrate transporter"/>
    <property type="match status" value="1"/>
</dbReference>
<dbReference type="PROSITE" id="PS50850">
    <property type="entry name" value="MFS"/>
    <property type="match status" value="1"/>
</dbReference>
<dbReference type="PROSITE" id="PS00216">
    <property type="entry name" value="SUGAR_TRANSPORT_1"/>
    <property type="match status" value="1"/>
</dbReference>
<comment type="function">
    <text evidence="2">Insulin-independent facilitative glucose transporter.</text>
</comment>
<comment type="catalytic activity">
    <reaction evidence="2">
        <text>D-glucose(out) = D-glucose(in)</text>
        <dbReference type="Rhea" id="RHEA:60376"/>
        <dbReference type="ChEBI" id="CHEBI:4167"/>
    </reaction>
</comment>
<comment type="subcellular location">
    <subcellularLocation>
        <location evidence="2">Cell membrane</location>
        <topology evidence="4">Multi-pass membrane protein</topology>
    </subcellularLocation>
    <subcellularLocation>
        <location evidence="1">Endomembrane system</location>
        <topology evidence="4">Multi-pass membrane protein</topology>
    </subcellularLocation>
    <subcellularLocation>
        <location evidence="3">Cytoplasm</location>
        <location evidence="3">Perinuclear region</location>
    </subcellularLocation>
    <text evidence="3">Localizes primarily perinuclear region in the absence of insulin.</text>
</comment>
<comment type="similarity">
    <text evidence="6">Belongs to the major facilitator superfamily. Sugar transporter (TC 2.A.1.1) family. Glucose transporter subfamily.</text>
</comment>
<accession>Q9BE72</accession>
<sequence>MVPVENTEGPNLLNQKGTAVETEGSYRASGSRHPPWARGCGMFTFLSSVTAAVSGLLVGYELGIISGALLQIKTLLTLSCHEQEMVVSSLLIGALLASLTGGVLIDRYGRRTAIILSSCLLGLGSLVLILSLSYTVLIVGRIAIGVSISLSSIATCVYIAEIAPQHRRGLLVSLNELMIVIGILSAYISNYAFANVFHGWKYMFGLVIPLGILQAIAMYFLPPSPRFLVMKGQEGAASKVLGRLRALSDATEELTVIKSSLKDEYQYSFWDLFRSKDNMRTRIMIGLTLVFFVQITGQPNILFYASTVLKSVGFQSNEAASLASTGVGVVKVISTIPATLLVDHVGSKTFLCIGSSVMAASLVTMGIVNLNIHMNFTNICRSHNSINQSLDESVIYGPGNLSASNNTLRDHFKGIASHSRSSLMPLRNDVDKRGETTSASLLNAVLSHTEYQIVTDPGDVPAFLKWLSLASLLVYVAAFSIGLGPMPWLVLSEIFPGGIRGRAMALTSSMNWGINLLISLTFLTVTDLIGLPWVCFIYTIMSLASLLFVVMFIPETKGCSLEQISMELAKVNYVKNNICFMSHHQEELVPRQPQKRKPQEQLLECNKLCGRGQSRQLSPEN</sequence>
<reference key="1">
    <citation type="journal article" date="2002" name="Genome Biol.">
        <title>Prediction of unidentified human genes on the basis of sequence similarity to novel cDNAs from cynomolgus monkey brain.</title>
        <authorList>
            <person name="Osada N."/>
            <person name="Hida M."/>
            <person name="Kusuda J."/>
            <person name="Tanuma R."/>
            <person name="Hirata M."/>
            <person name="Hirai M."/>
            <person name="Terao K."/>
            <person name="Suzuki Y."/>
            <person name="Sugano S."/>
            <person name="Hashimoto K."/>
        </authorList>
    </citation>
    <scope>NUCLEOTIDE SEQUENCE [LARGE SCALE MRNA]</scope>
    <source>
        <tissue>Frontal cortex</tissue>
    </source>
</reference>